<comment type="function">
    <text evidence="1 4">Oxidoreductase; part of the gene cluster that mediates the biosynthesis of the dimeric xanthones cryptosporioptides (PubMed:30996871). The pathway begins with the synthesis of atrochrysone thioester by the polyketide synthase dmx-nrPKS (Probable). The atrochrysone carboxyl ACP thioesterase dmxR1 then breaks the thioester bond and releases the atrochrysone carboxylic acid from dmx-nrPKS (Probable). Atrochrysone carboxylic acid is decarboxylated by the decarboxylase dmxR15, and oxidized by the anthrone oxygenase dmxR16 to yield emodin (Probable). Emodin is then reduced to emodin hydroquinone by the oxidoreductase dmxR7 (Probable). A-ring reduction by the short chain dehydrogenase dmxR18, dehydration by the scytalone dehydratase-like protein dmxR17 and probable spontaneous re-oxidation, results in overall deoxygenation to chrysophanol (PubMed:30996871). Baeyer-Villiger oxidation by the Baeyer-Villiger monooxygenase (BVMO) dmxR6 then yields monodictylactone in equilibrium with monodictyphenone (PubMed:30996871). In the case of the cryptosporioptides biosynthesis, monodictylactone is reduced at C-12 to an alcohol (by the short chain dehydrogenases dmxR12 or dmxR8) and hydroxylated at C-5 by dmxR9, yielding the electron-rich aromatic which could eliminate H(2)O to form the ortho-quinonemethide, followed by tautomerisation to paraquinone and complete the formal reduction to produce the 10-methylgroup (Probable). Conjugate addition of C-4a-OH to the resulting paraquinone by the monooxygenase dmxR10 then gives cyclohexadienone, which is then reduced at C-5 by the short chain dehydrogenase dmxR3 to give the dihydroxanthone (Probable). The 6,7-epoxide in the cryptosporioptides could be introduced by the cytochrome P450 monooxygenase dmxL3 (Probable). The highly reducing PKS dmxL2 manufactures butyrate, which is further carboxylated by dmxL1 to form ethylmalonate (PubMed:30996871). It is not yet clear whether the carboxylation occurs while the butyrate is attached to the ACP of dmxL2, but this unusual fungal metabolite could then be esterified to O-5 by the O-acetyltransferase dmxR13 (PubMed:30996871). Finally, dimerization performed by dmxR5 gives the observed dimers cryptosporioptides A, B and C as the final products of the pathway (PubMed:30996871).</text>
</comment>
<comment type="pathway">
    <text evidence="4">Secondary metabolite biosynthesis.</text>
</comment>
<comment type="similarity">
    <text evidence="3">Belongs to the avfA family.</text>
</comment>
<organism>
    <name type="scientific">Cryptosporiopsis sp. (strain 8999)</name>
    <dbReference type="NCBI Taxonomy" id="2572248"/>
    <lineage>
        <taxon>Eukaryota</taxon>
        <taxon>Fungi</taxon>
        <taxon>Dikarya</taxon>
        <taxon>Ascomycota</taxon>
        <taxon>Pezizomycotina</taxon>
        <taxon>Leotiomycetes</taxon>
        <taxon>Helotiales</taxon>
        <taxon>Dermateaceae</taxon>
        <taxon>Cryptosporiopsis</taxon>
    </lineage>
</organism>
<protein>
    <recommendedName>
        <fullName evidence="2">Oxidoreductase dmxR7</fullName>
        <ecNumber evidence="4">1.-.-.-</ecNumber>
    </recommendedName>
    <alternativeName>
        <fullName evidence="2">Dimeric xanthone biosynthesis cluster protein R7</fullName>
    </alternativeName>
</protein>
<sequence>MATYAILGSTGNCGSAIIQNLLKSPNNKVHAYCRNQTKLQRLIPEVVDNKNVQIFQGSIYDVELLADCVRGTKAVFLVVTTNDNVPGCRVSRDCATSVIQALQKIKAEASPGLKLPKLVLLSSATIDDHLARHMPGWFRPIMLAAASHVYEDLRLTEVFLRSHADWVSSIFIKPAGLSVDVSRGHKLTLDEEESFISYLDLSAGMIEAAADDESRYDGRNVGVELSSRGELRCVLSWD</sequence>
<reference key="1">
    <citation type="journal article" date="2019" name="Chem. Sci.">
        <title>Structure revision of cryptosporioptides and determination of the genetic basis for dimeric xanthone biosynthesis in fungi.</title>
        <authorList>
            <person name="Greco C."/>
            <person name="de Mattos-Shipley K."/>
            <person name="Bailey A.M."/>
            <person name="Mulholland N.P."/>
            <person name="Vincent J.L."/>
            <person name="Willis C.L."/>
            <person name="Cox R.J."/>
            <person name="Simpson T.J."/>
        </authorList>
    </citation>
    <scope>NUCLEOTIDE SEQUENCE [GENOMIC DNA]</scope>
    <scope>FUNCTION</scope>
    <scope>PATHWAY</scope>
    <source>
        <strain>8999</strain>
    </source>
</reference>
<feature type="chain" id="PRO_0000453440" description="Oxidoreductase dmxR7">
    <location>
        <begin position="1"/>
        <end position="238"/>
    </location>
</feature>
<dbReference type="EC" id="1.-.-.-" evidence="4"/>
<dbReference type="EMBL" id="MK182094">
    <property type="protein sequence ID" value="QCL09098.1"/>
    <property type="molecule type" value="Genomic_DNA"/>
</dbReference>
<dbReference type="SMR" id="A0A4P8DJG9"/>
<dbReference type="GO" id="GO:0004497">
    <property type="term" value="F:monooxygenase activity"/>
    <property type="evidence" value="ECO:0007669"/>
    <property type="project" value="UniProtKB-KW"/>
</dbReference>
<dbReference type="Gene3D" id="3.40.50.720">
    <property type="entry name" value="NAD(P)-binding Rossmann-like Domain"/>
    <property type="match status" value="1"/>
</dbReference>
<dbReference type="InterPro" id="IPR016040">
    <property type="entry name" value="NAD(P)-bd_dom"/>
</dbReference>
<dbReference type="InterPro" id="IPR036291">
    <property type="entry name" value="NAD(P)-bd_dom_sf"/>
</dbReference>
<dbReference type="PANTHER" id="PTHR15020">
    <property type="entry name" value="FLAVIN REDUCTASE-RELATED"/>
    <property type="match status" value="1"/>
</dbReference>
<dbReference type="PANTHER" id="PTHR15020:SF37">
    <property type="entry name" value="OXIDOREDUCTASE MDPK"/>
    <property type="match status" value="1"/>
</dbReference>
<dbReference type="Pfam" id="PF13460">
    <property type="entry name" value="NAD_binding_10"/>
    <property type="match status" value="1"/>
</dbReference>
<dbReference type="SUPFAM" id="SSF51735">
    <property type="entry name" value="NAD(P)-binding Rossmann-fold domains"/>
    <property type="match status" value="1"/>
</dbReference>
<evidence type="ECO:0000269" key="1">
    <source>
    </source>
</evidence>
<evidence type="ECO:0000303" key="2">
    <source>
    </source>
</evidence>
<evidence type="ECO:0000305" key="3"/>
<evidence type="ECO:0000305" key="4">
    <source>
    </source>
</evidence>
<name>DMXR7_CRYX8</name>
<proteinExistence type="inferred from homology"/>
<accession>A0A4P8DJG9</accession>
<gene>
    <name evidence="2" type="primary">dmxR7</name>
</gene>
<keyword id="KW-0503">Monooxygenase</keyword>
<keyword id="KW-0560">Oxidoreductase</keyword>